<evidence type="ECO:0000255" key="1">
    <source>
        <dbReference type="HAMAP-Rule" id="MF_01187"/>
    </source>
</evidence>
<gene>
    <name type="ordered locus">GOX0764</name>
</gene>
<sequence length="59" mass="6634">MTTELDPRLLSLLVCPVTKGPLTYDRETQELISPRAKLAFPIRDGIPIMLPEEARQIDA</sequence>
<dbReference type="EMBL" id="CP000009">
    <property type="protein sequence ID" value="AAW60538.1"/>
    <property type="molecule type" value="Genomic_DNA"/>
</dbReference>
<dbReference type="RefSeq" id="WP_011252335.1">
    <property type="nucleotide sequence ID" value="NZ_LT900338.1"/>
</dbReference>
<dbReference type="SMR" id="Q5FSV8"/>
<dbReference type="STRING" id="290633.GOX0764"/>
<dbReference type="KEGG" id="gox:GOX0764"/>
<dbReference type="eggNOG" id="COG2835">
    <property type="taxonomic scope" value="Bacteria"/>
</dbReference>
<dbReference type="HOGENOM" id="CLU_155659_2_2_5"/>
<dbReference type="Proteomes" id="UP000006375">
    <property type="component" value="Chromosome"/>
</dbReference>
<dbReference type="GO" id="GO:0005829">
    <property type="term" value="C:cytosol"/>
    <property type="evidence" value="ECO:0007669"/>
    <property type="project" value="TreeGrafter"/>
</dbReference>
<dbReference type="FunFam" id="2.20.25.10:FF:000002">
    <property type="entry name" value="UPF0434 protein YcaR"/>
    <property type="match status" value="1"/>
</dbReference>
<dbReference type="Gene3D" id="2.20.25.10">
    <property type="match status" value="1"/>
</dbReference>
<dbReference type="HAMAP" id="MF_01187">
    <property type="entry name" value="UPF0434"/>
    <property type="match status" value="1"/>
</dbReference>
<dbReference type="InterPro" id="IPR005651">
    <property type="entry name" value="Trm112-like"/>
</dbReference>
<dbReference type="PANTHER" id="PTHR33505:SF4">
    <property type="entry name" value="PROTEIN PREY, MITOCHONDRIAL"/>
    <property type="match status" value="1"/>
</dbReference>
<dbReference type="PANTHER" id="PTHR33505">
    <property type="entry name" value="ZGC:162634"/>
    <property type="match status" value="1"/>
</dbReference>
<dbReference type="Pfam" id="PF03966">
    <property type="entry name" value="Trm112p"/>
    <property type="match status" value="1"/>
</dbReference>
<dbReference type="SUPFAM" id="SSF158997">
    <property type="entry name" value="Trm112p-like"/>
    <property type="match status" value="1"/>
</dbReference>
<reference key="1">
    <citation type="journal article" date="2005" name="Nat. Biotechnol.">
        <title>Complete genome sequence of the acetic acid bacterium Gluconobacter oxydans.</title>
        <authorList>
            <person name="Prust C."/>
            <person name="Hoffmeister M."/>
            <person name="Liesegang H."/>
            <person name="Wiezer A."/>
            <person name="Fricke W.F."/>
            <person name="Ehrenreich A."/>
            <person name="Gottschalk G."/>
            <person name="Deppenmeier U."/>
        </authorList>
    </citation>
    <scope>NUCLEOTIDE SEQUENCE [LARGE SCALE GENOMIC DNA]</scope>
    <source>
        <strain>621H</strain>
    </source>
</reference>
<feature type="chain" id="PRO_0000291097" description="UPF0434 protein GOX0764">
    <location>
        <begin position="1"/>
        <end position="59"/>
    </location>
</feature>
<proteinExistence type="inferred from homology"/>
<keyword id="KW-1185">Reference proteome</keyword>
<organism>
    <name type="scientific">Gluconobacter oxydans (strain 621H)</name>
    <name type="common">Gluconobacter suboxydans</name>
    <dbReference type="NCBI Taxonomy" id="290633"/>
    <lineage>
        <taxon>Bacteria</taxon>
        <taxon>Pseudomonadati</taxon>
        <taxon>Pseudomonadota</taxon>
        <taxon>Alphaproteobacteria</taxon>
        <taxon>Acetobacterales</taxon>
        <taxon>Acetobacteraceae</taxon>
        <taxon>Gluconobacter</taxon>
    </lineage>
</organism>
<comment type="similarity">
    <text evidence="1">Belongs to the UPF0434 family.</text>
</comment>
<accession>Q5FSV8</accession>
<name>Y764_GLUOX</name>
<protein>
    <recommendedName>
        <fullName evidence="1">UPF0434 protein GOX0764</fullName>
    </recommendedName>
</protein>